<feature type="chain" id="PRO_1000194586" description="Ribonuclease P protein component 1">
    <location>
        <begin position="1"/>
        <end position="125"/>
    </location>
</feature>
<feature type="region of interest" description="Disordered" evidence="2">
    <location>
        <begin position="1"/>
        <end position="24"/>
    </location>
</feature>
<feature type="compositionally biased region" description="Basic and acidic residues" evidence="2">
    <location>
        <begin position="1"/>
        <end position="13"/>
    </location>
</feature>
<reference key="1">
    <citation type="journal article" date="2008" name="J. Bacteriol.">
        <title>The complete genome sequence of Thermococcus onnurineus NA1 reveals a mixed heterotrophic and carboxydotrophic metabolism.</title>
        <authorList>
            <person name="Lee H.S."/>
            <person name="Kang S.G."/>
            <person name="Bae S.S."/>
            <person name="Lim J.K."/>
            <person name="Cho Y."/>
            <person name="Kim Y.J."/>
            <person name="Jeon J.H."/>
            <person name="Cha S.-S."/>
            <person name="Kwon K.K."/>
            <person name="Kim H.-T."/>
            <person name="Park C.-J."/>
            <person name="Lee H.-W."/>
            <person name="Kim S.I."/>
            <person name="Chun J."/>
            <person name="Colwell R.R."/>
            <person name="Kim S.-J."/>
            <person name="Lee J.-H."/>
        </authorList>
    </citation>
    <scope>NUCLEOTIDE SEQUENCE [LARGE SCALE GENOMIC DNA]</scope>
    <source>
        <strain>NA1</strain>
    </source>
</reference>
<proteinExistence type="inferred from homology"/>
<dbReference type="EC" id="3.1.26.5" evidence="1"/>
<dbReference type="EMBL" id="CP000855">
    <property type="protein sequence ID" value="ACJ15559.1"/>
    <property type="molecule type" value="Genomic_DNA"/>
</dbReference>
<dbReference type="RefSeq" id="WP_012571032.1">
    <property type="nucleotide sequence ID" value="NC_011529.1"/>
</dbReference>
<dbReference type="SMR" id="B6YSM2"/>
<dbReference type="STRING" id="523850.TON_1969"/>
<dbReference type="GeneID" id="7017721"/>
<dbReference type="KEGG" id="ton:TON_1969"/>
<dbReference type="eggNOG" id="arCOG00784">
    <property type="taxonomic scope" value="Archaea"/>
</dbReference>
<dbReference type="HOGENOM" id="CLU_107020_1_0_2"/>
<dbReference type="OrthoDB" id="39019at2157"/>
<dbReference type="Proteomes" id="UP000002727">
    <property type="component" value="Chromosome"/>
</dbReference>
<dbReference type="GO" id="GO:0005737">
    <property type="term" value="C:cytoplasm"/>
    <property type="evidence" value="ECO:0007669"/>
    <property type="project" value="UniProtKB-SubCell"/>
</dbReference>
<dbReference type="GO" id="GO:0030677">
    <property type="term" value="C:ribonuclease P complex"/>
    <property type="evidence" value="ECO:0007669"/>
    <property type="project" value="UniProtKB-UniRule"/>
</dbReference>
<dbReference type="GO" id="GO:0004526">
    <property type="term" value="F:ribonuclease P activity"/>
    <property type="evidence" value="ECO:0007669"/>
    <property type="project" value="UniProtKB-UniRule"/>
</dbReference>
<dbReference type="GO" id="GO:0003723">
    <property type="term" value="F:RNA binding"/>
    <property type="evidence" value="ECO:0007669"/>
    <property type="project" value="InterPro"/>
</dbReference>
<dbReference type="GO" id="GO:0001682">
    <property type="term" value="P:tRNA 5'-leader removal"/>
    <property type="evidence" value="ECO:0007669"/>
    <property type="project" value="UniProtKB-UniRule"/>
</dbReference>
<dbReference type="Gene3D" id="2.30.30.210">
    <property type="entry name" value="Ribonuclease P/MRP, subunit p29"/>
    <property type="match status" value="1"/>
</dbReference>
<dbReference type="HAMAP" id="MF_00754">
    <property type="entry name" value="RNase_P_1"/>
    <property type="match status" value="1"/>
</dbReference>
<dbReference type="InterPro" id="IPR036980">
    <property type="entry name" value="RNase_P/MRP_Rpp29_sf"/>
</dbReference>
<dbReference type="InterPro" id="IPR023538">
    <property type="entry name" value="RNP1"/>
</dbReference>
<dbReference type="InterPro" id="IPR023534">
    <property type="entry name" value="Rof/RNase_P-like"/>
</dbReference>
<dbReference type="InterPro" id="IPR002730">
    <property type="entry name" value="Rpp29/RNP1"/>
</dbReference>
<dbReference type="Pfam" id="PF01868">
    <property type="entry name" value="RNase_P-MRP_p29"/>
    <property type="match status" value="1"/>
</dbReference>
<dbReference type="SMART" id="SM00538">
    <property type="entry name" value="POP4"/>
    <property type="match status" value="1"/>
</dbReference>
<dbReference type="SUPFAM" id="SSF101744">
    <property type="entry name" value="Rof/RNase P subunit-like"/>
    <property type="match status" value="1"/>
</dbReference>
<comment type="function">
    <text evidence="1">Part of ribonuclease P, a protein complex that generates mature tRNA molecules by cleaving their 5'-ends.</text>
</comment>
<comment type="catalytic activity">
    <reaction evidence="1">
        <text>Endonucleolytic cleavage of RNA, removing 5'-extranucleotides from tRNA precursor.</text>
        <dbReference type="EC" id="3.1.26.5"/>
    </reaction>
</comment>
<comment type="subunit">
    <text evidence="1">Consists of a catalytic RNA component and at least 4-5 protein subunits.</text>
</comment>
<comment type="subcellular location">
    <subcellularLocation>
        <location evidence="1">Cytoplasm</location>
    </subcellularLocation>
</comment>
<comment type="similarity">
    <text evidence="1">Belongs to the eukaryotic/archaeal RNase P protein component 1 family.</text>
</comment>
<organism>
    <name type="scientific">Thermococcus onnurineus (strain NA1)</name>
    <dbReference type="NCBI Taxonomy" id="523850"/>
    <lineage>
        <taxon>Archaea</taxon>
        <taxon>Methanobacteriati</taxon>
        <taxon>Methanobacteriota</taxon>
        <taxon>Thermococci</taxon>
        <taxon>Thermococcales</taxon>
        <taxon>Thermococcaceae</taxon>
        <taxon>Thermococcus</taxon>
    </lineage>
</organism>
<evidence type="ECO:0000255" key="1">
    <source>
        <dbReference type="HAMAP-Rule" id="MF_00754"/>
    </source>
</evidence>
<evidence type="ECO:0000256" key="2">
    <source>
        <dbReference type="SAM" id="MobiDB-lite"/>
    </source>
</evidence>
<sequence>MRRNGKEGKDRAPGRPQRKGQEVASRPWIFRGLDRNRVTAKNILWHELIGLKAKIIRASHPELVGIEGYVLDETRNTLTICGERVWVIPKDVVELEFEVGDKRIRINGRELIGRPEMRLKKRWRR</sequence>
<gene>
    <name evidence="1" type="primary">rnp1</name>
    <name type="ordered locus">TON_1969</name>
</gene>
<keyword id="KW-0963">Cytoplasm</keyword>
<keyword id="KW-0255">Endonuclease</keyword>
<keyword id="KW-0378">Hydrolase</keyword>
<keyword id="KW-0540">Nuclease</keyword>
<keyword id="KW-0819">tRNA processing</keyword>
<accession>B6YSM2</accession>
<protein>
    <recommendedName>
        <fullName evidence="1">Ribonuclease P protein component 1</fullName>
        <shortName evidence="1">RNase P component 1</shortName>
        <ecNumber evidence="1">3.1.26.5</ecNumber>
    </recommendedName>
    <alternativeName>
        <fullName evidence="1">Rpp29</fullName>
    </alternativeName>
</protein>
<name>RNP1_THEON</name>